<sequence length="279" mass="31133">MSDNLLNGANGASTVSQFQEKVKDLGVSLHDFTAYYPSSLDTVSASLRPISDPSSDGAFKKIKTEGLGGSVFGSSIAGVTNTPARLCSLERPESERLNSRRRHRTTFTQEQLQELDAAFQKSHYPDIYVREELARITKLNEARIQVWFQNRRAKHRKHEKQLNKAINPPHSFLSNPANTLMRQGMYPAALNRDGFWYQSYQRPMPYPTASPSYSNSFTNPIANFGHSITSFQADDEFYQKSLALRMTTTPSAATAATSLANINYQQTQPSEASTNPPSI</sequence>
<protein>
    <recommendedName>
        <fullName evidence="8">Homeobox protein unc-42</fullName>
    </recommendedName>
    <alternativeName>
        <fullName evidence="11">Uncoordinated protein 42</fullName>
    </alternativeName>
</protein>
<proteinExistence type="evidence at protein level"/>
<keyword id="KW-0025">Alternative splicing</keyword>
<keyword id="KW-0238">DNA-binding</keyword>
<keyword id="KW-0371">Homeobox</keyword>
<keyword id="KW-0539">Nucleus</keyword>
<keyword id="KW-1185">Reference proteome</keyword>
<keyword id="KW-0804">Transcription</keyword>
<keyword id="KW-0805">Transcription regulation</keyword>
<feature type="chain" id="PRO_0000452987" description="Homeobox protein unc-42">
    <location>
        <begin position="1"/>
        <end position="279"/>
    </location>
</feature>
<feature type="DNA-binding region" description="Homeobox" evidence="1">
    <location>
        <begin position="100"/>
        <end position="159"/>
    </location>
</feature>
<feature type="splice variant" id="VSP_061078" description="In isoform c." evidence="8">
    <location>
        <begin position="1"/>
        <end position="180"/>
    </location>
</feature>
<feature type="splice variant" id="VSP_061079" description="In isoform e and isoform d." evidence="8">
    <original>MSDNLLNGANGASTVSQFQEKVKDLGVSLHDFTAYYPSSLDTVSASLRPISDPSS</original>
    <variation>MYYY</variation>
    <location>
        <begin position="1"/>
        <end position="55"/>
    </location>
</feature>
<feature type="splice variant" id="VSP_061080" description="In isoform a and isoform d." evidence="8">
    <location>
        <begin position="85"/>
        <end position="99"/>
    </location>
</feature>
<feature type="mutagenesis site" description="In e419; axon outgrowth and pathfinding defects; mechanosensory defects; abolishes expression of oligopeptide transporter pept-3 in AVE neurons, and both FMRFamide related neuropeptide precursor gene flp-1 and neuron specific calcium sensor ncs-1 in AVK neurons. Abolishes expression of seven-transmembrane receptor srb in ASH neurons. Chemical synaptic connectivity is reduced in neurons that normally express unc-42 in the pre- and post-synaptic neurons. Reduces expression of vesicular acetylcholine transporter unc-17 and hence cholinergic identity in all but one of the normally unc-42(+) neurons. Reduces the expression of cholinergic receptor systems, and also the expression of the tyramine-gated chloride channel lgc-55. Highly patterned expression of neuropeptides and neuropeptide receptors is severely affected. Expression of innexins inx-18a and inx-19 is selectively down-regulated in those neurons that normally express unc-42. Abolishes expression of putative osmosensor osm-10 in ASH neurons." evidence="3 4 5 6 7">
    <location>
        <begin position="107"/>
        <end position="279"/>
    </location>
</feature>
<feature type="mutagenesis site" description="In e270; axon outgrowth, pioneering and pathfinding defects; mechanosensory defects." evidence="3 4 7">
    <original>V</original>
    <variation>E</variation>
    <location>
        <position position="146"/>
    </location>
</feature>
<feature type="mutagenesis site" description="In gm23; axon pioneering and pathfinding defects." evidence="3 7">
    <location>
        <begin position="147"/>
        <end position="279"/>
    </location>
</feature>
<organism evidence="9">
    <name type="scientific">Caenorhabditis elegans</name>
    <dbReference type="NCBI Taxonomy" id="6239"/>
    <lineage>
        <taxon>Eukaryota</taxon>
        <taxon>Metazoa</taxon>
        <taxon>Ecdysozoa</taxon>
        <taxon>Nematoda</taxon>
        <taxon>Chromadorea</taxon>
        <taxon>Rhabditida</taxon>
        <taxon>Rhabditina</taxon>
        <taxon>Rhabditomorpha</taxon>
        <taxon>Rhabditoidea</taxon>
        <taxon>Rhabditidae</taxon>
        <taxon>Peloderinae</taxon>
        <taxon>Caenorhabditis</taxon>
    </lineage>
</organism>
<reference evidence="9" key="1">
    <citation type="journal article" date="1998" name="Science">
        <title>Genome sequence of the nematode C. elegans: a platform for investigating biology.</title>
        <authorList>
            <consortium name="The C. elegans sequencing consortium"/>
        </authorList>
    </citation>
    <scope>NUCLEOTIDE SEQUENCE [LARGE SCALE GENOMIC DNA]</scope>
    <source>
        <strain evidence="9">Bristol N2</strain>
    </source>
</reference>
<reference evidence="8" key="2">
    <citation type="journal article" date="1997" name="Development">
        <title>Genes that guide growth cones along the C. elegans ventral nerve cord.</title>
        <authorList>
            <person name="Wightman B."/>
            <person name="Baran R."/>
            <person name="Garriga G."/>
        </authorList>
    </citation>
    <scope>FUNCTION</scope>
    <scope>MUTAGENESIS OF VAL-146; 147-TRP--ILE-279 AND 107-PHE--ILE-279</scope>
</reference>
<reference evidence="8" key="3">
    <citation type="journal article" date="1999" name="Development">
        <title>The C. elegans homeodomain gene unc-42 regulates chemosensory and glutamate receptor expression.</title>
        <authorList>
            <person name="Baran R."/>
            <person name="Aronoff R."/>
            <person name="Garriga G."/>
        </authorList>
    </citation>
    <scope>FUNCTION</scope>
    <scope>DEVELOPMENTAL STAGE</scope>
    <scope>MUTAGENESIS OF VAL-146; 147-TRP--ILE-279 AND 107-PHE--ILE-279</scope>
</reference>
<reference evidence="8" key="4">
    <citation type="journal article" date="2001" name="J. Neurosci.">
        <title>Differential expression of glutamate receptor subunits in the nervous system of Caenorhabditis elegans and their regulation by the homeodomain protein UNC-42.</title>
        <authorList>
            <person name="Brockie P.J."/>
            <person name="Madsen D.M."/>
            <person name="Zheng Y."/>
            <person name="Mellem J."/>
            <person name="Maricq A.V."/>
        </authorList>
    </citation>
    <scope>FUNCTION</scope>
    <scope>MUTAGENESIS OF 107-PHE--ILE-279 AND VAL-146</scope>
</reference>
<reference evidence="8" key="5">
    <citation type="journal article" date="2005" name="Dev. Biol.">
        <title>The C. elegans nuclear receptor gene fax-1 and homeobox gene unc-42 coordinate interneuron identity by regulating the expression of glutamate receptor subunits and other neuron-specific genes.</title>
        <authorList>
            <person name="Wightman B."/>
            <person name="Ebert B."/>
            <person name="Carmean N."/>
            <person name="Weber K."/>
            <person name="Clever S."/>
        </authorList>
    </citation>
    <scope>FUNCTION</scope>
    <scope>MUTAGENESIS OF 107-PHE--ILE-279</scope>
</reference>
<reference key="6">
    <citation type="journal article" date="2021" name="Elife">
        <title>The Prop1-like homeobox gene unc-42 specifies the identity of synaptically connected neurons.</title>
        <authorList>
            <person name="Berghoff E.G."/>
            <person name="Glenwinkel L."/>
            <person name="Bhattacharya A."/>
            <person name="Sun H."/>
            <person name="Varol E."/>
            <person name="Mohammadi N."/>
            <person name="Antone A."/>
            <person name="Feng Y."/>
            <person name="Nguyen K."/>
            <person name="Cook S.J."/>
            <person name="Wood J.F."/>
            <person name="Masoudi N."/>
            <person name="Cros C.C."/>
            <person name="Ramadan Y.H."/>
            <person name="Ferkey D.M."/>
            <person name="Hall D.H."/>
            <person name="Hobert O."/>
        </authorList>
    </citation>
    <scope>FUNCTION</scope>
    <scope>TISSUE SPECIFICITY</scope>
    <scope>MUTAGENESIS OF 107-PHE--ILE-279</scope>
</reference>
<gene>
    <name evidence="11" type="primary">unc-42</name>
    <name evidence="11" type="ORF">F58E6.10</name>
</gene>
<evidence type="ECO:0000255" key="1">
    <source>
        <dbReference type="PROSITE-ProRule" id="PRU00108"/>
    </source>
</evidence>
<evidence type="ECO:0000255" key="2">
    <source>
        <dbReference type="RuleBase" id="RU000682"/>
    </source>
</evidence>
<evidence type="ECO:0000269" key="3">
    <source>
    </source>
</evidence>
<evidence type="ECO:0000269" key="4">
    <source>
    </source>
</evidence>
<evidence type="ECO:0000269" key="5">
    <source>
    </source>
</evidence>
<evidence type="ECO:0000269" key="6">
    <source>
    </source>
</evidence>
<evidence type="ECO:0000269" key="7">
    <source>
    </source>
</evidence>
<evidence type="ECO:0000305" key="8"/>
<evidence type="ECO:0000312" key="9">
    <source>
        <dbReference type="Proteomes" id="UP000001940"/>
    </source>
</evidence>
<evidence type="ECO:0000312" key="10">
    <source>
        <dbReference type="WormBase" id="F58E6.10a"/>
    </source>
</evidence>
<evidence type="ECO:0000312" key="11">
    <source>
        <dbReference type="WormBase" id="F58E6.10b"/>
    </source>
</evidence>
<evidence type="ECO:0000312" key="12">
    <source>
        <dbReference type="WormBase" id="F58E6.10c"/>
    </source>
</evidence>
<evidence type="ECO:0000312" key="13">
    <source>
        <dbReference type="WormBase" id="F58E6.10d"/>
    </source>
</evidence>
<evidence type="ECO:0000312" key="14">
    <source>
        <dbReference type="WormBase" id="F58E6.10e"/>
    </source>
</evidence>
<accession>L8E946</accession>
<accession>G5EBS8</accession>
<accession>N1NSG8</accession>
<accession>N1NTL5</accession>
<accession>N1NVB9</accession>
<comment type="function">
    <text evidence="3 4 5 7">Probable transcription factor (PubMed:11222641, PubMed:34165428, PubMed:9216999). Required for initial outgrowth and pathfinding of axon growth cones along the ventral nerve cord (VNC) (PubMed:11222641, PubMed:34165428, PubMed:9216999). Involved in specifying neuron identity, in concert with nuclear hormone receptor family member fax-1, or with transcription factors unc-3, cfi-1, or hlh-34, perhaps acting via positive feedforward loops (PubMed:10207148, PubMed:16183052, PubMed:34165428). Establishes electrically- and chemically-interconnected neuron circuits, acting by modulating the expression of neurotransmitter pathway genes, neurotransmitter receptors, neuropeptides, and neuropeptide receptors (PubMed:34165428). Required for cholinergic and glutamatergic synaptic communication (PubMed:34165428). Plays a role in locomotion and mechanosensory response, perhaps via regulation of chemosensory receptor expression, and is required for expression of glutamate receptors, including glr-1, glr-4 and glr-5 (PubMed:10207148, PubMed:11222641, PubMed:34165428).</text>
</comment>
<comment type="subcellular location">
    <subcellularLocation>
        <location evidence="1 2">Nucleus</location>
    </subcellularLocation>
</comment>
<comment type="alternative products">
    <event type="alternative splicing"/>
    <isoform>
        <id>L8E946-1</id>
        <name evidence="11">b</name>
        <sequence type="displayed"/>
    </isoform>
    <isoform>
        <id>L8E946-2</id>
        <name evidence="10">a</name>
        <sequence type="described" ref="VSP_061080"/>
    </isoform>
    <isoform>
        <id>L8E946-3</id>
        <name evidence="14">e</name>
        <sequence type="described" ref="VSP_061079"/>
    </isoform>
    <isoform>
        <id>L8E946-4</id>
        <name evidence="13">d</name>
        <sequence type="described" ref="VSP_061079 VSP_061080"/>
    </isoform>
    <isoform>
        <id>L8E946-5</id>
        <name evidence="12">c</name>
        <sequence type="described" ref="VSP_061078"/>
    </isoform>
</comment>
<comment type="tissue specificity">
    <text evidence="6">Expressed in 40 neurons located in the head, which can be divided into 15 anatomically distinct classes; unc-42-expressing neurons are unrelated by lineage but are synaptically interconnected.</text>
</comment>
<comment type="developmental stage">
    <text evidence="3">Expressed in neurons from 260 minutes of embryogenesis, comma stage and into adulthood (at protein level) (PubMed:10207148). Expressed in late stage (3 and a half-fold) embryos in at least 20 pairs of neurons of the head, including the AVA, AVD and AVE interneurons, ASH sensory neurons, and RMD and SMB motor neurons (PubMed:10207148). Expressed at high levels in the AIN, AVH, AVJ, AVK, RIV, SAA and SIB interneurons (PubMed:10207148). At larval L2 stage, expressed in the tail in the PVT neuron (PubMed:10207148).</text>
</comment>
<comment type="similarity">
    <text evidence="8">Belongs to the paired homeobox family.</text>
</comment>
<dbReference type="EMBL" id="BX284605">
    <property type="protein sequence ID" value="CAA94780.3"/>
    <property type="molecule type" value="Genomic_DNA"/>
</dbReference>
<dbReference type="EMBL" id="BX284605">
    <property type="protein sequence ID" value="CCQ25677.1"/>
    <property type="molecule type" value="Genomic_DNA"/>
</dbReference>
<dbReference type="EMBL" id="BX284605">
    <property type="protein sequence ID" value="CCW45994.1"/>
    <property type="molecule type" value="Genomic_DNA"/>
</dbReference>
<dbReference type="EMBL" id="BX284605">
    <property type="protein sequence ID" value="CCW45995.1"/>
    <property type="molecule type" value="Genomic_DNA"/>
</dbReference>
<dbReference type="EMBL" id="BX284605">
    <property type="protein sequence ID" value="CCW45996.1"/>
    <property type="molecule type" value="Genomic_DNA"/>
</dbReference>
<dbReference type="PIR" id="T22296">
    <property type="entry name" value="T22296"/>
</dbReference>
<dbReference type="RefSeq" id="NP_001263845.1">
    <molecule id="L8E946-1"/>
    <property type="nucleotide sequence ID" value="NM_001276916.4"/>
</dbReference>
<dbReference type="RefSeq" id="NP_001294700.1">
    <molecule id="L8E946-4"/>
    <property type="nucleotide sequence ID" value="NM_001307771.2"/>
</dbReference>
<dbReference type="RefSeq" id="NP_001294701.1">
    <molecule id="L8E946-5"/>
    <property type="nucleotide sequence ID" value="NM_001307772.1"/>
</dbReference>
<dbReference type="RefSeq" id="NP_001294702.1">
    <molecule id="L8E946-3"/>
    <property type="nucleotide sequence ID" value="NM_001307773.2"/>
</dbReference>
<dbReference type="RefSeq" id="NP_505519.3">
    <molecule id="L8E946-2"/>
    <property type="nucleotide sequence ID" value="NM_073118.6"/>
</dbReference>
<dbReference type="SMR" id="L8E946"/>
<dbReference type="FunCoup" id="L8E946">
    <property type="interactions" value="3"/>
</dbReference>
<dbReference type="IntAct" id="L8E946">
    <property type="interactions" value="18"/>
</dbReference>
<dbReference type="STRING" id="6239.F58E6.10b.1"/>
<dbReference type="PaxDb" id="6239-F58E6.10b"/>
<dbReference type="EnsemblMetazoa" id="F58E6.10a.1">
    <molecule id="L8E946-2"/>
    <property type="protein sequence ID" value="F58E6.10a.1"/>
    <property type="gene ID" value="WBGene00006778"/>
</dbReference>
<dbReference type="EnsemblMetazoa" id="F58E6.10b.1">
    <molecule id="L8E946-1"/>
    <property type="protein sequence ID" value="F58E6.10b.1"/>
    <property type="gene ID" value="WBGene00006778"/>
</dbReference>
<dbReference type="EnsemblMetazoa" id="F58E6.10c.1">
    <molecule id="L8E946-5"/>
    <property type="protein sequence ID" value="F58E6.10c.1"/>
    <property type="gene ID" value="WBGene00006778"/>
</dbReference>
<dbReference type="EnsemblMetazoa" id="F58E6.10d.1">
    <molecule id="L8E946-4"/>
    <property type="protein sequence ID" value="F58E6.10d.1"/>
    <property type="gene ID" value="WBGene00006778"/>
</dbReference>
<dbReference type="EnsemblMetazoa" id="F58E6.10e.1">
    <molecule id="L8E946-3"/>
    <property type="protein sequence ID" value="F58E6.10e.1"/>
    <property type="gene ID" value="WBGene00006778"/>
</dbReference>
<dbReference type="GeneID" id="192081"/>
<dbReference type="KEGG" id="cel:CELE_F58E6.10"/>
<dbReference type="AGR" id="WB:WBGene00006778"/>
<dbReference type="CTD" id="192081"/>
<dbReference type="WormBase" id="F58E6.10a">
    <molecule id="L8E946-2"/>
    <property type="protein sequence ID" value="CE39164"/>
    <property type="gene ID" value="WBGene00006778"/>
    <property type="gene designation" value="unc-42"/>
</dbReference>
<dbReference type="WormBase" id="F58E6.10b">
    <molecule id="L8E946-1"/>
    <property type="protein sequence ID" value="CE48141"/>
    <property type="gene ID" value="WBGene00006778"/>
    <property type="gene designation" value="unc-42"/>
</dbReference>
<dbReference type="WormBase" id="F58E6.10c">
    <molecule id="L8E946-5"/>
    <property type="protein sequence ID" value="CE48371"/>
    <property type="gene ID" value="WBGene00006778"/>
    <property type="gene designation" value="unc-42"/>
</dbReference>
<dbReference type="WormBase" id="F58E6.10d">
    <molecule id="L8E946-4"/>
    <property type="protein sequence ID" value="CE48350"/>
    <property type="gene ID" value="WBGene00006778"/>
    <property type="gene designation" value="unc-42"/>
</dbReference>
<dbReference type="WormBase" id="F58E6.10e">
    <molecule id="L8E946-3"/>
    <property type="protein sequence ID" value="CE48409"/>
    <property type="gene ID" value="WBGene00006778"/>
    <property type="gene designation" value="unc-42"/>
</dbReference>
<dbReference type="eggNOG" id="KOG0490">
    <property type="taxonomic scope" value="Eukaryota"/>
</dbReference>
<dbReference type="GeneTree" id="ENSGT00940000165391"/>
<dbReference type="HOGENOM" id="CLU_1125699_0_0_1"/>
<dbReference type="InParanoid" id="L8E946"/>
<dbReference type="OMA" id="FWYQSYQ"/>
<dbReference type="OrthoDB" id="6159439at2759"/>
<dbReference type="SignaLink" id="L8E946"/>
<dbReference type="PRO" id="PR:L8E946"/>
<dbReference type="Proteomes" id="UP000001940">
    <property type="component" value="Chromosome V"/>
</dbReference>
<dbReference type="Bgee" id="WBGene00006778">
    <property type="expression patterns" value="Expressed in pharyngeal muscle cell (C elegans) and 3 other cell types or tissues"/>
</dbReference>
<dbReference type="ExpressionAtlas" id="L8E946">
    <property type="expression patterns" value="baseline and differential"/>
</dbReference>
<dbReference type="GO" id="GO:0005634">
    <property type="term" value="C:nucleus"/>
    <property type="evidence" value="ECO:0007669"/>
    <property type="project" value="UniProtKB-SubCell"/>
</dbReference>
<dbReference type="GO" id="GO:0000981">
    <property type="term" value="F:DNA-binding transcription factor activity, RNA polymerase II-specific"/>
    <property type="evidence" value="ECO:0000318"/>
    <property type="project" value="GO_Central"/>
</dbReference>
<dbReference type="GO" id="GO:0000977">
    <property type="term" value="F:RNA polymerase II transcription regulatory region sequence-specific DNA binding"/>
    <property type="evidence" value="ECO:0000318"/>
    <property type="project" value="GO_Central"/>
</dbReference>
<dbReference type="GO" id="GO:0061564">
    <property type="term" value="P:axon development"/>
    <property type="evidence" value="ECO:0000315"/>
    <property type="project" value="UniProtKB"/>
</dbReference>
<dbReference type="GO" id="GO:0007411">
    <property type="term" value="P:axon guidance"/>
    <property type="evidence" value="ECO:0000315"/>
    <property type="project" value="UniProtKB"/>
</dbReference>
<dbReference type="GO" id="GO:0008345">
    <property type="term" value="P:larval locomotory behavior"/>
    <property type="evidence" value="ECO:0000315"/>
    <property type="project" value="UniProtKB"/>
</dbReference>
<dbReference type="GO" id="GO:0030182">
    <property type="term" value="P:neuron differentiation"/>
    <property type="evidence" value="ECO:0000315"/>
    <property type="project" value="UniProtKB"/>
</dbReference>
<dbReference type="GO" id="GO:0048665">
    <property type="term" value="P:neuron fate specification"/>
    <property type="evidence" value="ECO:0000315"/>
    <property type="project" value="UniProtKB"/>
</dbReference>
<dbReference type="GO" id="GO:0045944">
    <property type="term" value="P:positive regulation of transcription by RNA polymerase II"/>
    <property type="evidence" value="ECO:0000315"/>
    <property type="project" value="WormBase"/>
</dbReference>
<dbReference type="GO" id="GO:0010468">
    <property type="term" value="P:regulation of gene expression"/>
    <property type="evidence" value="ECO:0000315"/>
    <property type="project" value="UniProtKB"/>
</dbReference>
<dbReference type="GO" id="GO:0006357">
    <property type="term" value="P:regulation of transcription by RNA polymerase II"/>
    <property type="evidence" value="ECO:0000315"/>
    <property type="project" value="UniProtKB"/>
</dbReference>
<dbReference type="GO" id="GO:0050808">
    <property type="term" value="P:synapse organization"/>
    <property type="evidence" value="ECO:0000315"/>
    <property type="project" value="UniProtKB"/>
</dbReference>
<dbReference type="CDD" id="cd00086">
    <property type="entry name" value="homeodomain"/>
    <property type="match status" value="1"/>
</dbReference>
<dbReference type="FunFam" id="1.10.10.60:FF:000138">
    <property type="entry name" value="Homeobox protein prophet of Pit-1"/>
    <property type="match status" value="1"/>
</dbReference>
<dbReference type="Gene3D" id="1.10.10.60">
    <property type="entry name" value="Homeodomain-like"/>
    <property type="match status" value="1"/>
</dbReference>
<dbReference type="InterPro" id="IPR001356">
    <property type="entry name" value="HD"/>
</dbReference>
<dbReference type="InterPro" id="IPR017970">
    <property type="entry name" value="Homeobox_CS"/>
</dbReference>
<dbReference type="InterPro" id="IPR009057">
    <property type="entry name" value="Homeodomain-like_sf"/>
</dbReference>
<dbReference type="InterPro" id="IPR050649">
    <property type="entry name" value="Paired_Homeobox_TFs"/>
</dbReference>
<dbReference type="PANTHER" id="PTHR24329">
    <property type="entry name" value="HOMEOBOX PROTEIN ARISTALESS"/>
    <property type="match status" value="1"/>
</dbReference>
<dbReference type="PANTHER" id="PTHR24329:SF577">
    <property type="entry name" value="HOMEOBOX PROTEIN UNC-42"/>
    <property type="match status" value="1"/>
</dbReference>
<dbReference type="Pfam" id="PF00046">
    <property type="entry name" value="Homeodomain"/>
    <property type="match status" value="1"/>
</dbReference>
<dbReference type="SMART" id="SM00389">
    <property type="entry name" value="HOX"/>
    <property type="match status" value="1"/>
</dbReference>
<dbReference type="SUPFAM" id="SSF46689">
    <property type="entry name" value="Homeodomain-like"/>
    <property type="match status" value="1"/>
</dbReference>
<dbReference type="PROSITE" id="PS00027">
    <property type="entry name" value="HOMEOBOX_1"/>
    <property type="match status" value="1"/>
</dbReference>
<dbReference type="PROSITE" id="PS50071">
    <property type="entry name" value="HOMEOBOX_2"/>
    <property type="match status" value="1"/>
</dbReference>
<name>UNC42_CAEEL</name>